<dbReference type="EMBL" id="CP000025">
    <property type="protein sequence ID" value="AAW34702.1"/>
    <property type="molecule type" value="Genomic_DNA"/>
</dbReference>
<dbReference type="RefSeq" id="WP_002860589.1">
    <property type="nucleotide sequence ID" value="NC_003912.7"/>
</dbReference>
<dbReference type="SMR" id="Q5HX54"/>
<dbReference type="KEGG" id="cjr:CJE0107"/>
<dbReference type="HOGENOM" id="CLU_665280_0_0_7"/>
<dbReference type="GO" id="GO:0042597">
    <property type="term" value="C:periplasmic space"/>
    <property type="evidence" value="ECO:0007669"/>
    <property type="project" value="UniProtKB-SubCell"/>
</dbReference>
<dbReference type="GO" id="GO:0051301">
    <property type="term" value="P:cell division"/>
    <property type="evidence" value="ECO:0007669"/>
    <property type="project" value="UniProtKB-KW"/>
</dbReference>
<dbReference type="GO" id="GO:0017038">
    <property type="term" value="P:protein import"/>
    <property type="evidence" value="ECO:0007669"/>
    <property type="project" value="InterPro"/>
</dbReference>
<dbReference type="FunFam" id="2.120.10.30:FF:000140">
    <property type="entry name" value="Tol-Pal system protein TolB"/>
    <property type="match status" value="1"/>
</dbReference>
<dbReference type="Gene3D" id="2.120.10.30">
    <property type="entry name" value="TolB, C-terminal domain"/>
    <property type="match status" value="1"/>
</dbReference>
<dbReference type="HAMAP" id="MF_00671">
    <property type="entry name" value="TolB"/>
    <property type="match status" value="1"/>
</dbReference>
<dbReference type="InterPro" id="IPR011042">
    <property type="entry name" value="6-blade_b-propeller_TolB-like"/>
</dbReference>
<dbReference type="InterPro" id="IPR014167">
    <property type="entry name" value="Tol-Pal_TolB"/>
</dbReference>
<dbReference type="NCBIfam" id="NF003124">
    <property type="entry name" value="PRK04043.1"/>
    <property type="match status" value="1"/>
</dbReference>
<dbReference type="PANTHER" id="PTHR36842:SF1">
    <property type="entry name" value="PROTEIN TOLB"/>
    <property type="match status" value="1"/>
</dbReference>
<dbReference type="PANTHER" id="PTHR36842">
    <property type="entry name" value="PROTEIN TOLB HOMOLOG"/>
    <property type="match status" value="1"/>
</dbReference>
<dbReference type="SUPFAM" id="SSF69304">
    <property type="entry name" value="Tricorn protease N-terminal domain"/>
    <property type="match status" value="1"/>
</dbReference>
<reference key="1">
    <citation type="journal article" date="2005" name="PLoS Biol.">
        <title>Major structural differences and novel potential virulence mechanisms from the genomes of multiple Campylobacter species.</title>
        <authorList>
            <person name="Fouts D.E."/>
            <person name="Mongodin E.F."/>
            <person name="Mandrell R.E."/>
            <person name="Miller W.G."/>
            <person name="Rasko D.A."/>
            <person name="Ravel J."/>
            <person name="Brinkac L.M."/>
            <person name="DeBoy R.T."/>
            <person name="Parker C.T."/>
            <person name="Daugherty S.C."/>
            <person name="Dodson R.J."/>
            <person name="Durkin A.S."/>
            <person name="Madupu R."/>
            <person name="Sullivan S.A."/>
            <person name="Shetty J.U."/>
            <person name="Ayodeji M.A."/>
            <person name="Shvartsbeyn A."/>
            <person name="Schatz M.C."/>
            <person name="Badger J.H."/>
            <person name="Fraser C.M."/>
            <person name="Nelson K.E."/>
        </authorList>
    </citation>
    <scope>NUCLEOTIDE SEQUENCE [LARGE SCALE GENOMIC DNA]</scope>
    <source>
        <strain>RM1221</strain>
    </source>
</reference>
<gene>
    <name evidence="1" type="primary">tolB</name>
    <name type="ordered locus">CJE0107</name>
</gene>
<protein>
    <recommendedName>
        <fullName evidence="1">Tol-Pal system protein TolB</fullName>
    </recommendedName>
</protein>
<sequence length="402" mass="44739">MKKIVAIFLVFLGSLWAEDPVIDVVNSGVVLPKIIVKDNSNLSDENLKKSFYNIIVNDLKVSSNFEVVANATETSNYTFEYTLNKNGNTLSLNVKIKAGGSDKSEQTYTLNGLEQYPFLAHKSVKASVNALGLAPVDWMDHKILIARNSSSKKSQIIMADYTLTYQKVIVDGGLNLFPKWGNKEQTLFYYTAYDHDKPTLYRYDLNTNKASKILSSGGMVVASDVSVDGSKLLVTMAPKDQPDVYLYDLNTKNLTQLTNYSGIDVNGNFIGSDDSKVVFVSDRLGYPNIFMQDLNSNSAEQVVFHGRNNSAVSTYKDFLVYSSREPNQAGVFNIYLMSINSDYIRQLTANGKNLFPRFSSDGGSIVFIKYLGAQSALGVIRVNANKTFYFPLRVGKIQSIDW</sequence>
<comment type="function">
    <text evidence="1">Part of the Tol-Pal system, which plays a role in outer membrane invagination during cell division and is important for maintaining outer membrane integrity.</text>
</comment>
<comment type="subunit">
    <text evidence="1">The Tol-Pal system is composed of five core proteins: the inner membrane proteins TolA, TolQ and TolR, the periplasmic protein TolB and the outer membrane protein Pal. They form a network linking the inner and outer membranes and the peptidoglycan layer.</text>
</comment>
<comment type="subcellular location">
    <subcellularLocation>
        <location evidence="1">Periplasm</location>
    </subcellularLocation>
</comment>
<comment type="similarity">
    <text evidence="1">Belongs to the TolB family.</text>
</comment>
<keyword id="KW-0131">Cell cycle</keyword>
<keyword id="KW-0132">Cell division</keyword>
<keyword id="KW-0574">Periplasm</keyword>
<keyword id="KW-0732">Signal</keyword>
<feature type="signal peptide" evidence="1">
    <location>
        <begin position="1"/>
        <end position="17"/>
    </location>
</feature>
<feature type="chain" id="PRO_0000034635" description="Tol-Pal system protein TolB" evidence="1">
    <location>
        <begin position="18"/>
        <end position="402"/>
    </location>
</feature>
<evidence type="ECO:0000255" key="1">
    <source>
        <dbReference type="HAMAP-Rule" id="MF_00671"/>
    </source>
</evidence>
<organism>
    <name type="scientific">Campylobacter jejuni (strain RM1221)</name>
    <dbReference type="NCBI Taxonomy" id="195099"/>
    <lineage>
        <taxon>Bacteria</taxon>
        <taxon>Pseudomonadati</taxon>
        <taxon>Campylobacterota</taxon>
        <taxon>Epsilonproteobacteria</taxon>
        <taxon>Campylobacterales</taxon>
        <taxon>Campylobacteraceae</taxon>
        <taxon>Campylobacter</taxon>
    </lineage>
</organism>
<name>TOLB_CAMJR</name>
<accession>Q5HX54</accession>
<proteinExistence type="inferred from homology"/>